<reference key="1">
    <citation type="journal article" date="2023" name="ISME J.">
        <title>Novel D-glutamate catabolic pathway in marine Proteobacteria and halophilic archaea.</title>
        <authorList>
            <person name="Yu Y."/>
            <person name="Wang P."/>
            <person name="Cao H.Y."/>
            <person name="Teng Z.J."/>
            <person name="Zhu Y."/>
            <person name="Wang M."/>
            <person name="McMinn A."/>
            <person name="Chen Y."/>
            <person name="Xiang H."/>
            <person name="Zhang Y.Z."/>
            <person name="Chen X.L."/>
            <person name="Zhang Y.Q."/>
        </authorList>
    </citation>
    <scope>NUCLEOTIDE SEQUENCE [GENOMIC DNA]</scope>
    <scope>FUNCTION</scope>
    <scope>CATALYTIC ACTIVITY</scope>
    <scope>INDUCTION</scope>
    <scope>DISRUPTION PHENOTYPE</scope>
    <source>
        <strain>CF6-2</strain>
    </source>
</reference>
<keyword id="KW-0413">Isomerase</keyword>
<keyword id="KW-0460">Magnesium</keyword>
<keyword id="KW-0479">Metal-binding</keyword>
<gene>
    <name evidence="3" type="primary">dgcA</name>
</gene>
<feature type="chain" id="PRO_0000462126" description="N-acetyl-D-glutamate racemase">
    <location>
        <begin position="1"/>
        <end position="315"/>
    </location>
</feature>
<feature type="binding site" evidence="1">
    <location>
        <position position="147"/>
    </location>
    <ligand>
        <name>Mg(2+)</name>
        <dbReference type="ChEBI" id="CHEBI:18420"/>
    </ligand>
</feature>
<feature type="binding site" evidence="1">
    <location>
        <position position="173"/>
    </location>
    <ligand>
        <name>Mg(2+)</name>
        <dbReference type="ChEBI" id="CHEBI:18420"/>
    </ligand>
</feature>
<feature type="binding site" evidence="1">
    <location>
        <position position="196"/>
    </location>
    <ligand>
        <name>Mg(2+)</name>
        <dbReference type="ChEBI" id="CHEBI:18420"/>
    </ligand>
</feature>
<evidence type="ECO:0000250" key="1">
    <source>
        <dbReference type="UniProtKB" id="Q8A861"/>
    </source>
</evidence>
<evidence type="ECO:0000269" key="2">
    <source>
    </source>
</evidence>
<evidence type="ECO:0000303" key="3">
    <source>
    </source>
</evidence>
<evidence type="ECO:0000305" key="4"/>
<evidence type="ECO:0000305" key="5">
    <source>
    </source>
</evidence>
<dbReference type="EC" id="5.1.1.25" evidence="2"/>
<dbReference type="EMBL" id="ON505815">
    <property type="protein sequence ID" value="USH59574.1"/>
    <property type="molecule type" value="Genomic_DNA"/>
</dbReference>
<dbReference type="CDD" id="cd03319">
    <property type="entry name" value="L-Ala-DL-Glu_epimerase"/>
    <property type="match status" value="1"/>
</dbReference>
<dbReference type="Gene3D" id="3.20.20.120">
    <property type="entry name" value="Enolase-like C-terminal domain"/>
    <property type="match status" value="1"/>
</dbReference>
<dbReference type="Gene3D" id="3.30.390.10">
    <property type="entry name" value="Enolase-like, N-terminal domain"/>
    <property type="match status" value="1"/>
</dbReference>
<dbReference type="InterPro" id="IPR034593">
    <property type="entry name" value="DgoD-like"/>
</dbReference>
<dbReference type="InterPro" id="IPR034603">
    <property type="entry name" value="Dipeptide_epimerase"/>
</dbReference>
<dbReference type="InterPro" id="IPR036849">
    <property type="entry name" value="Enolase-like_C_sf"/>
</dbReference>
<dbReference type="InterPro" id="IPR029017">
    <property type="entry name" value="Enolase-like_N"/>
</dbReference>
<dbReference type="InterPro" id="IPR029065">
    <property type="entry name" value="Enolase_C-like"/>
</dbReference>
<dbReference type="InterPro" id="IPR018110">
    <property type="entry name" value="Mandel_Rmase/mucon_lact_enz_CS"/>
</dbReference>
<dbReference type="InterPro" id="IPR013342">
    <property type="entry name" value="Mandelate_racemase_C"/>
</dbReference>
<dbReference type="InterPro" id="IPR013341">
    <property type="entry name" value="Mandelate_racemase_N_dom"/>
</dbReference>
<dbReference type="PANTHER" id="PTHR48080">
    <property type="entry name" value="D-GALACTONATE DEHYDRATASE-RELATED"/>
    <property type="match status" value="1"/>
</dbReference>
<dbReference type="PANTHER" id="PTHR48080:SF3">
    <property type="entry name" value="ENOLASE SUPERFAMILY MEMBER DDB_G0284701"/>
    <property type="match status" value="1"/>
</dbReference>
<dbReference type="Pfam" id="PF13378">
    <property type="entry name" value="MR_MLE_C"/>
    <property type="match status" value="1"/>
</dbReference>
<dbReference type="Pfam" id="PF02746">
    <property type="entry name" value="MR_MLE_N"/>
    <property type="match status" value="1"/>
</dbReference>
<dbReference type="SFLD" id="SFLDF00010">
    <property type="entry name" value="dipeptide_epimerase"/>
    <property type="match status" value="1"/>
</dbReference>
<dbReference type="SFLD" id="SFLDG00180">
    <property type="entry name" value="muconate_cycloisomerase"/>
    <property type="match status" value="1"/>
</dbReference>
<dbReference type="SMART" id="SM00922">
    <property type="entry name" value="MR_MLE"/>
    <property type="match status" value="1"/>
</dbReference>
<dbReference type="SUPFAM" id="SSF51604">
    <property type="entry name" value="Enolase C-terminal domain-like"/>
    <property type="match status" value="1"/>
</dbReference>
<dbReference type="SUPFAM" id="SSF54826">
    <property type="entry name" value="Enolase N-terminal domain-like"/>
    <property type="match status" value="1"/>
</dbReference>
<dbReference type="PROSITE" id="PS00909">
    <property type="entry name" value="MR_MLE_2"/>
    <property type="match status" value="1"/>
</dbReference>
<organism>
    <name type="scientific">Pseudoalteromonas sp</name>
    <dbReference type="NCBI Taxonomy" id="53249"/>
    <lineage>
        <taxon>Bacteria</taxon>
        <taxon>Pseudomonadati</taxon>
        <taxon>Pseudomonadota</taxon>
        <taxon>Gammaproteobacteria</taxon>
        <taxon>Alteromonadales</taxon>
        <taxon>Pseudoalteromonadaceae</taxon>
        <taxon>Pseudoalteromonas</taxon>
    </lineage>
</organism>
<sequence length="315" mass="34744">MIVVVIADKEFYGWAESVPYARYDESISTSTKQIKALFCDRSFTRKMELSELINTLPAGAARNALDCAMWDLQAKQSTRPVAEILSKTSITSICAHTLSIDTPKAMQEAVLAMNSPPLVKVKLDKQDIIARMTAIANAAPHSQFIVDANEDWCFRDLEENVEALKALNVVLIEQPLPAGEDEQLINFTSPIPLCADESCHTENDLPYLQGRYQVVNIKLDKTGGLTQACSLASKAQKMGFDIMLGCMVGSSLAMAPASLLASQARYVDLDGPLLVLKDRKHHFTYADGQMSPLQSCLWGGAHNSERFFVDRLQLQ</sequence>
<accession>P0DXZ2</accession>
<proteinExistence type="evidence at protein level"/>
<name>DGCA_PSEAS</name>
<protein>
    <recommendedName>
        <fullName evidence="3">N-acetyl-D-glutamate racemase</fullName>
        <shortName evidence="3">N-acetyl-D-Glu racemase</shortName>
        <ecNumber evidence="2">5.1.1.25</ecNumber>
    </recommendedName>
</protein>
<comment type="function">
    <text evidence="2">Racemase involved in a deamination-independent D-glutamate degradation pathway, named the DgcN-DgcA pathway (PubMed:36690779). Catalyzes the conversion of N-acetyl-D-glutamate to N-acetyl-L-glutamate (PubMed:36690779). Also shows racemase activity towards the dipeptide L-Ala-D-Glu, a key constituent of peptidoglycan muropeptides, suggesting that it may also contribute to the degradation of peptidoglycans (PubMed:36690779).</text>
</comment>
<comment type="catalytic activity">
    <reaction evidence="2">
        <text>N-acetyl-D-glutamate = N-acetyl-L-glutamate</text>
        <dbReference type="Rhea" id="RHEA:76499"/>
        <dbReference type="ChEBI" id="CHEBI:44337"/>
        <dbReference type="ChEBI" id="CHEBI:195260"/>
        <dbReference type="EC" id="5.1.1.25"/>
    </reaction>
    <physiologicalReaction direction="left-to-right" evidence="2">
        <dbReference type="Rhea" id="RHEA:76500"/>
    </physiologicalReaction>
</comment>
<comment type="cofactor">
    <cofactor evidence="1">
        <name>Mg(2+)</name>
        <dbReference type="ChEBI" id="CHEBI:18420"/>
    </cofactor>
    <text evidence="1">Binds 1 Mg(2+) ion per subunit.</text>
</comment>
<comment type="pathway">
    <text evidence="5">Amino-acid degradation.</text>
</comment>
<comment type="induction">
    <text evidence="2">Expression is up-regulated in the presence of D-glutamate (PubMed:36690779). Transcriptionally regulated by DgcR (PubMed:36690779).</text>
</comment>
<comment type="disruption phenotype">
    <text evidence="2">The growth of the deletion mutant is significantly reduced with D-glutamate as the sole nitrogen source.</text>
</comment>
<comment type="similarity">
    <text evidence="4">Belongs to the mandelate racemase/muconate lactonizing enzyme family.</text>
</comment>